<comment type="function">
    <text evidence="1">Could be involved in insertion of integral membrane proteins into the membrane.</text>
</comment>
<comment type="subcellular location">
    <subcellularLocation>
        <location evidence="1">Cell inner membrane</location>
        <topology evidence="1">Peripheral membrane protein</topology>
        <orientation evidence="1">Cytoplasmic side</orientation>
    </subcellularLocation>
</comment>
<comment type="similarity">
    <text evidence="1">Belongs to the UPF0161 family.</text>
</comment>
<name>YIDD_SALPC</name>
<dbReference type="EMBL" id="CP000857">
    <property type="protein sequence ID" value="ACN47998.1"/>
    <property type="molecule type" value="Genomic_DNA"/>
</dbReference>
<dbReference type="RefSeq" id="WP_001307474.1">
    <property type="nucleotide sequence ID" value="NC_012125.1"/>
</dbReference>
<dbReference type="GeneID" id="97443257"/>
<dbReference type="KEGG" id="sei:SPC_3928"/>
<dbReference type="HOGENOM" id="CLU_144811_5_2_6"/>
<dbReference type="Proteomes" id="UP000001599">
    <property type="component" value="Chromosome"/>
</dbReference>
<dbReference type="GO" id="GO:0005886">
    <property type="term" value="C:plasma membrane"/>
    <property type="evidence" value="ECO:0007669"/>
    <property type="project" value="UniProtKB-SubCell"/>
</dbReference>
<dbReference type="HAMAP" id="MF_00386">
    <property type="entry name" value="UPF0161_YidD"/>
    <property type="match status" value="1"/>
</dbReference>
<dbReference type="InterPro" id="IPR002696">
    <property type="entry name" value="Membr_insert_effic_factor_YidD"/>
</dbReference>
<dbReference type="NCBIfam" id="TIGR00278">
    <property type="entry name" value="membrane protein insertion efficiency factor YidD"/>
    <property type="match status" value="1"/>
</dbReference>
<dbReference type="PANTHER" id="PTHR33383">
    <property type="entry name" value="MEMBRANE PROTEIN INSERTION EFFICIENCY FACTOR-RELATED"/>
    <property type="match status" value="1"/>
</dbReference>
<dbReference type="PANTHER" id="PTHR33383:SF1">
    <property type="entry name" value="MEMBRANE PROTEIN INSERTION EFFICIENCY FACTOR-RELATED"/>
    <property type="match status" value="1"/>
</dbReference>
<dbReference type="Pfam" id="PF01809">
    <property type="entry name" value="YidD"/>
    <property type="match status" value="1"/>
</dbReference>
<dbReference type="SMART" id="SM01234">
    <property type="entry name" value="Haemolytic"/>
    <property type="match status" value="1"/>
</dbReference>
<gene>
    <name evidence="1" type="primary">yidD</name>
    <name type="ordered locus">SPC_3928</name>
</gene>
<feature type="chain" id="PRO_1000197779" description="Putative membrane protein insertion efficiency factor">
    <location>
        <begin position="1"/>
        <end position="85"/>
    </location>
</feature>
<accession>C0Q2L2</accession>
<evidence type="ECO:0000255" key="1">
    <source>
        <dbReference type="HAMAP-Rule" id="MF_00386"/>
    </source>
</evidence>
<proteinExistence type="inferred from homology"/>
<sequence length="85" mass="9381">MAPPLSPGSRVLIALIRVYQRLISPLLGPHCRFTPTCSSYGIEALRRFGVIKGSWLTVKRVLKCHPLHPGGDDPVPPGPFDTREH</sequence>
<reference key="1">
    <citation type="journal article" date="2009" name="PLoS ONE">
        <title>Salmonella paratyphi C: genetic divergence from Salmonella choleraesuis and pathogenic convergence with Salmonella typhi.</title>
        <authorList>
            <person name="Liu W.-Q."/>
            <person name="Feng Y."/>
            <person name="Wang Y."/>
            <person name="Zou Q.-H."/>
            <person name="Chen F."/>
            <person name="Guo J.-T."/>
            <person name="Peng Y.-H."/>
            <person name="Jin Y."/>
            <person name="Li Y.-G."/>
            <person name="Hu S.-N."/>
            <person name="Johnston R.N."/>
            <person name="Liu G.-R."/>
            <person name="Liu S.-L."/>
        </authorList>
    </citation>
    <scope>NUCLEOTIDE SEQUENCE [LARGE SCALE GENOMIC DNA]</scope>
    <source>
        <strain>RKS4594</strain>
    </source>
</reference>
<protein>
    <recommendedName>
        <fullName evidence="1">Putative membrane protein insertion efficiency factor</fullName>
    </recommendedName>
</protein>
<keyword id="KW-0997">Cell inner membrane</keyword>
<keyword id="KW-1003">Cell membrane</keyword>
<keyword id="KW-0472">Membrane</keyword>
<organism>
    <name type="scientific">Salmonella paratyphi C (strain RKS4594)</name>
    <dbReference type="NCBI Taxonomy" id="476213"/>
    <lineage>
        <taxon>Bacteria</taxon>
        <taxon>Pseudomonadati</taxon>
        <taxon>Pseudomonadota</taxon>
        <taxon>Gammaproteobacteria</taxon>
        <taxon>Enterobacterales</taxon>
        <taxon>Enterobacteriaceae</taxon>
        <taxon>Salmonella</taxon>
    </lineage>
</organism>